<protein>
    <recommendedName>
        <fullName evidence="1">Dual-specificity RNA methyltransferase RlmN</fullName>
        <ecNumber evidence="1">2.1.1.192</ecNumber>
    </recommendedName>
    <alternativeName>
        <fullName evidence="1">23S rRNA (adenine(2503)-C(2))-methyltransferase</fullName>
    </alternativeName>
    <alternativeName>
        <fullName evidence="1">23S rRNA m2A2503 methyltransferase</fullName>
    </alternativeName>
    <alternativeName>
        <fullName evidence="1">Ribosomal RNA large subunit methyltransferase N</fullName>
    </alternativeName>
    <alternativeName>
        <fullName evidence="1">tRNA (adenine(37)-C(2))-methyltransferase</fullName>
    </alternativeName>
    <alternativeName>
        <fullName evidence="1">tRNA m2A37 methyltransferase</fullName>
    </alternativeName>
</protein>
<gene>
    <name evidence="1" type="primary">rlmN</name>
    <name type="ordered locus">KPK_1272</name>
</gene>
<organism>
    <name type="scientific">Klebsiella pneumoniae (strain 342)</name>
    <dbReference type="NCBI Taxonomy" id="507522"/>
    <lineage>
        <taxon>Bacteria</taxon>
        <taxon>Pseudomonadati</taxon>
        <taxon>Pseudomonadota</taxon>
        <taxon>Gammaproteobacteria</taxon>
        <taxon>Enterobacterales</taxon>
        <taxon>Enterobacteriaceae</taxon>
        <taxon>Klebsiella/Raoultella group</taxon>
        <taxon>Klebsiella</taxon>
        <taxon>Klebsiella pneumoniae complex</taxon>
    </lineage>
</organism>
<dbReference type="EC" id="2.1.1.192" evidence="1"/>
<dbReference type="EMBL" id="CP000964">
    <property type="protein sequence ID" value="ACI10845.1"/>
    <property type="molecule type" value="Genomic_DNA"/>
</dbReference>
<dbReference type="SMR" id="B5XNL2"/>
<dbReference type="KEGG" id="kpe:KPK_1272"/>
<dbReference type="HOGENOM" id="CLU_029101_0_0_6"/>
<dbReference type="Proteomes" id="UP000001734">
    <property type="component" value="Chromosome"/>
</dbReference>
<dbReference type="GO" id="GO:0005737">
    <property type="term" value="C:cytoplasm"/>
    <property type="evidence" value="ECO:0007669"/>
    <property type="project" value="UniProtKB-SubCell"/>
</dbReference>
<dbReference type="GO" id="GO:0051539">
    <property type="term" value="F:4 iron, 4 sulfur cluster binding"/>
    <property type="evidence" value="ECO:0007669"/>
    <property type="project" value="UniProtKB-UniRule"/>
</dbReference>
<dbReference type="GO" id="GO:0046872">
    <property type="term" value="F:metal ion binding"/>
    <property type="evidence" value="ECO:0007669"/>
    <property type="project" value="UniProtKB-KW"/>
</dbReference>
<dbReference type="GO" id="GO:0070040">
    <property type="term" value="F:rRNA (adenine(2503)-C2-)-methyltransferase activity"/>
    <property type="evidence" value="ECO:0007669"/>
    <property type="project" value="UniProtKB-UniRule"/>
</dbReference>
<dbReference type="GO" id="GO:0019843">
    <property type="term" value="F:rRNA binding"/>
    <property type="evidence" value="ECO:0007669"/>
    <property type="project" value="UniProtKB-UniRule"/>
</dbReference>
<dbReference type="GO" id="GO:0002935">
    <property type="term" value="F:tRNA (adenine(37)-C2)-methyltransferase activity"/>
    <property type="evidence" value="ECO:0007669"/>
    <property type="project" value="UniProtKB-UniRule"/>
</dbReference>
<dbReference type="GO" id="GO:0000049">
    <property type="term" value="F:tRNA binding"/>
    <property type="evidence" value="ECO:0007669"/>
    <property type="project" value="UniProtKB-UniRule"/>
</dbReference>
<dbReference type="GO" id="GO:0070475">
    <property type="term" value="P:rRNA base methylation"/>
    <property type="evidence" value="ECO:0007669"/>
    <property type="project" value="UniProtKB-UniRule"/>
</dbReference>
<dbReference type="GO" id="GO:0030488">
    <property type="term" value="P:tRNA methylation"/>
    <property type="evidence" value="ECO:0007669"/>
    <property type="project" value="UniProtKB-UniRule"/>
</dbReference>
<dbReference type="CDD" id="cd01335">
    <property type="entry name" value="Radical_SAM"/>
    <property type="match status" value="1"/>
</dbReference>
<dbReference type="FunFam" id="1.10.150.530:FF:000001">
    <property type="entry name" value="Dual-specificity RNA methyltransferase RlmN"/>
    <property type="match status" value="1"/>
</dbReference>
<dbReference type="FunFam" id="3.20.20.70:FF:000008">
    <property type="entry name" value="Dual-specificity RNA methyltransferase RlmN"/>
    <property type="match status" value="1"/>
</dbReference>
<dbReference type="Gene3D" id="1.10.150.530">
    <property type="match status" value="1"/>
</dbReference>
<dbReference type="Gene3D" id="3.20.20.70">
    <property type="entry name" value="Aldolase class I"/>
    <property type="match status" value="1"/>
</dbReference>
<dbReference type="HAMAP" id="MF_01849">
    <property type="entry name" value="RNA_methyltr_RlmN"/>
    <property type="match status" value="1"/>
</dbReference>
<dbReference type="InterPro" id="IPR013785">
    <property type="entry name" value="Aldolase_TIM"/>
</dbReference>
<dbReference type="InterPro" id="IPR040072">
    <property type="entry name" value="Methyltransferase_A"/>
</dbReference>
<dbReference type="InterPro" id="IPR048641">
    <property type="entry name" value="RlmN_N"/>
</dbReference>
<dbReference type="InterPro" id="IPR027492">
    <property type="entry name" value="RNA_MTrfase_RlmN"/>
</dbReference>
<dbReference type="InterPro" id="IPR004383">
    <property type="entry name" value="rRNA_lsu_MTrfase_RlmN/Cfr"/>
</dbReference>
<dbReference type="InterPro" id="IPR007197">
    <property type="entry name" value="rSAM"/>
</dbReference>
<dbReference type="NCBIfam" id="NF008396">
    <property type="entry name" value="PRK11194.1"/>
    <property type="match status" value="1"/>
</dbReference>
<dbReference type="NCBIfam" id="TIGR00048">
    <property type="entry name" value="rRNA_mod_RlmN"/>
    <property type="match status" value="1"/>
</dbReference>
<dbReference type="PANTHER" id="PTHR30544">
    <property type="entry name" value="23S RRNA METHYLTRANSFERASE"/>
    <property type="match status" value="1"/>
</dbReference>
<dbReference type="PANTHER" id="PTHR30544:SF5">
    <property type="entry name" value="RADICAL SAM CORE DOMAIN-CONTAINING PROTEIN"/>
    <property type="match status" value="1"/>
</dbReference>
<dbReference type="Pfam" id="PF04055">
    <property type="entry name" value="Radical_SAM"/>
    <property type="match status" value="1"/>
</dbReference>
<dbReference type="Pfam" id="PF21016">
    <property type="entry name" value="RlmN_N"/>
    <property type="match status" value="1"/>
</dbReference>
<dbReference type="PIRSF" id="PIRSF006004">
    <property type="entry name" value="CHP00048"/>
    <property type="match status" value="1"/>
</dbReference>
<dbReference type="SFLD" id="SFLDF00275">
    <property type="entry name" value="adenosine_C2_methyltransferase"/>
    <property type="match status" value="1"/>
</dbReference>
<dbReference type="SFLD" id="SFLDS00029">
    <property type="entry name" value="Radical_SAM"/>
    <property type="match status" value="1"/>
</dbReference>
<dbReference type="SUPFAM" id="SSF102114">
    <property type="entry name" value="Radical SAM enzymes"/>
    <property type="match status" value="1"/>
</dbReference>
<dbReference type="PROSITE" id="PS51918">
    <property type="entry name" value="RADICAL_SAM"/>
    <property type="match status" value="1"/>
</dbReference>
<comment type="function">
    <text evidence="1">Specifically methylates position 2 of adenine 2503 in 23S rRNA and position 2 of adenine 37 in tRNAs. m2A2503 modification seems to play a crucial role in the proofreading step occurring at the peptidyl transferase center and thus would serve to optimize ribosomal fidelity.</text>
</comment>
<comment type="catalytic activity">
    <reaction evidence="1">
        <text>adenosine(2503) in 23S rRNA + 2 reduced [2Fe-2S]-[ferredoxin] + 2 S-adenosyl-L-methionine = 2-methyladenosine(2503) in 23S rRNA + 5'-deoxyadenosine + L-methionine + 2 oxidized [2Fe-2S]-[ferredoxin] + S-adenosyl-L-homocysteine</text>
        <dbReference type="Rhea" id="RHEA:42916"/>
        <dbReference type="Rhea" id="RHEA-COMP:10000"/>
        <dbReference type="Rhea" id="RHEA-COMP:10001"/>
        <dbReference type="Rhea" id="RHEA-COMP:10152"/>
        <dbReference type="Rhea" id="RHEA-COMP:10282"/>
        <dbReference type="ChEBI" id="CHEBI:17319"/>
        <dbReference type="ChEBI" id="CHEBI:33737"/>
        <dbReference type="ChEBI" id="CHEBI:33738"/>
        <dbReference type="ChEBI" id="CHEBI:57844"/>
        <dbReference type="ChEBI" id="CHEBI:57856"/>
        <dbReference type="ChEBI" id="CHEBI:59789"/>
        <dbReference type="ChEBI" id="CHEBI:74411"/>
        <dbReference type="ChEBI" id="CHEBI:74497"/>
        <dbReference type="EC" id="2.1.1.192"/>
    </reaction>
</comment>
<comment type="catalytic activity">
    <reaction evidence="1">
        <text>adenosine(37) in tRNA + 2 reduced [2Fe-2S]-[ferredoxin] + 2 S-adenosyl-L-methionine = 2-methyladenosine(37) in tRNA + 5'-deoxyadenosine + L-methionine + 2 oxidized [2Fe-2S]-[ferredoxin] + S-adenosyl-L-homocysteine</text>
        <dbReference type="Rhea" id="RHEA:43332"/>
        <dbReference type="Rhea" id="RHEA-COMP:10000"/>
        <dbReference type="Rhea" id="RHEA-COMP:10001"/>
        <dbReference type="Rhea" id="RHEA-COMP:10162"/>
        <dbReference type="Rhea" id="RHEA-COMP:10485"/>
        <dbReference type="ChEBI" id="CHEBI:17319"/>
        <dbReference type="ChEBI" id="CHEBI:33737"/>
        <dbReference type="ChEBI" id="CHEBI:33738"/>
        <dbReference type="ChEBI" id="CHEBI:57844"/>
        <dbReference type="ChEBI" id="CHEBI:57856"/>
        <dbReference type="ChEBI" id="CHEBI:59789"/>
        <dbReference type="ChEBI" id="CHEBI:74411"/>
        <dbReference type="ChEBI" id="CHEBI:74497"/>
        <dbReference type="EC" id="2.1.1.192"/>
    </reaction>
</comment>
<comment type="cofactor">
    <cofactor evidence="1">
        <name>[4Fe-4S] cluster</name>
        <dbReference type="ChEBI" id="CHEBI:49883"/>
    </cofactor>
    <text evidence="1">Binds 1 [4Fe-4S] cluster. The cluster is coordinated with 3 cysteines and an exchangeable S-adenosyl-L-methionine.</text>
</comment>
<comment type="subcellular location">
    <subcellularLocation>
        <location evidence="1">Cytoplasm</location>
    </subcellularLocation>
</comment>
<comment type="miscellaneous">
    <text evidence="1">Reaction proceeds by a ping-pong mechanism involving intermediate methylation of a conserved cysteine residue.</text>
</comment>
<comment type="similarity">
    <text evidence="1">Belongs to the radical SAM superfamily. RlmN family.</text>
</comment>
<name>RLMN_KLEP3</name>
<reference key="1">
    <citation type="journal article" date="2008" name="PLoS Genet.">
        <title>Complete genome sequence of the N2-fixing broad host range endophyte Klebsiella pneumoniae 342 and virulence predictions verified in mice.</title>
        <authorList>
            <person name="Fouts D.E."/>
            <person name="Tyler H.L."/>
            <person name="DeBoy R.T."/>
            <person name="Daugherty S."/>
            <person name="Ren Q."/>
            <person name="Badger J.H."/>
            <person name="Durkin A.S."/>
            <person name="Huot H."/>
            <person name="Shrivastava S."/>
            <person name="Kothari S."/>
            <person name="Dodson R.J."/>
            <person name="Mohamoud Y."/>
            <person name="Khouri H."/>
            <person name="Roesch L.F.W."/>
            <person name="Krogfelt K.A."/>
            <person name="Struve C."/>
            <person name="Triplett E.W."/>
            <person name="Methe B.A."/>
        </authorList>
    </citation>
    <scope>NUCLEOTIDE SEQUENCE [LARGE SCALE GENOMIC DNA]</scope>
    <source>
        <strain>342</strain>
    </source>
</reference>
<proteinExistence type="inferred from homology"/>
<accession>B5XNL2</accession>
<feature type="chain" id="PRO_1000188581" description="Dual-specificity RNA methyltransferase RlmN">
    <location>
        <begin position="1"/>
        <end position="388"/>
    </location>
</feature>
<feature type="domain" description="Radical SAM core" evidence="2">
    <location>
        <begin position="115"/>
        <end position="354"/>
    </location>
</feature>
<feature type="active site" description="Proton acceptor" evidence="1">
    <location>
        <position position="109"/>
    </location>
</feature>
<feature type="active site" description="S-methylcysteine intermediate" evidence="1">
    <location>
        <position position="359"/>
    </location>
</feature>
<feature type="binding site" evidence="1">
    <location>
        <position position="129"/>
    </location>
    <ligand>
        <name>[4Fe-4S] cluster</name>
        <dbReference type="ChEBI" id="CHEBI:49883"/>
        <note>4Fe-4S-S-AdoMet</note>
    </ligand>
</feature>
<feature type="binding site" evidence="1">
    <location>
        <position position="133"/>
    </location>
    <ligand>
        <name>[4Fe-4S] cluster</name>
        <dbReference type="ChEBI" id="CHEBI:49883"/>
        <note>4Fe-4S-S-AdoMet</note>
    </ligand>
</feature>
<feature type="binding site" evidence="1">
    <location>
        <position position="136"/>
    </location>
    <ligand>
        <name>[4Fe-4S] cluster</name>
        <dbReference type="ChEBI" id="CHEBI:49883"/>
        <note>4Fe-4S-S-AdoMet</note>
    </ligand>
</feature>
<feature type="binding site" evidence="1">
    <location>
        <begin position="183"/>
        <end position="184"/>
    </location>
    <ligand>
        <name>S-adenosyl-L-methionine</name>
        <dbReference type="ChEBI" id="CHEBI:59789"/>
    </ligand>
</feature>
<feature type="binding site" evidence="1">
    <location>
        <position position="215"/>
    </location>
    <ligand>
        <name>S-adenosyl-L-methionine</name>
        <dbReference type="ChEBI" id="CHEBI:59789"/>
    </ligand>
</feature>
<feature type="binding site" evidence="1">
    <location>
        <begin position="237"/>
        <end position="239"/>
    </location>
    <ligand>
        <name>S-adenosyl-L-methionine</name>
        <dbReference type="ChEBI" id="CHEBI:59789"/>
    </ligand>
</feature>
<feature type="binding site" evidence="1">
    <location>
        <position position="316"/>
    </location>
    <ligand>
        <name>S-adenosyl-L-methionine</name>
        <dbReference type="ChEBI" id="CHEBI:59789"/>
    </ligand>
</feature>
<feature type="disulfide bond" description="(transient)" evidence="1">
    <location>
        <begin position="122"/>
        <end position="359"/>
    </location>
</feature>
<sequence>MSEQIVTPDTAALTVPNKDAKINLLDLNRQQMREFFKNMGEKPFRADQVMKWMYHYCCDDFDEMTDINKVLRGKLKEVAEIRAPEVVEEQRSTDGTIKWAIAVGDQRVETVYIPEEDRATLCVSSQVGCALECKFCSTAQQGFNRNLRVSEIIGQVWRAAKIVGAVKTTGVRPITNVVMMGMGEPLLNLNNVVPAMEIMLDDFGFGLSKRRVTLSTSGVVPALDKLGDMIDVALAISLHAPNDTIRDEIVPINKKYNIETFLNSVRGYISKSNANQGRVTIEYVMLDHVNDGTEHAHELAALLKDTPCKINLIPWNPFPGAPYGRSSNSRIDRFSKVLMEYGFTTIVRKTRGDDIDAACGQLAGDVIDRTKRTLRKRMQGEAIDVKAV</sequence>
<keyword id="KW-0004">4Fe-4S</keyword>
<keyword id="KW-0963">Cytoplasm</keyword>
<keyword id="KW-1015">Disulfide bond</keyword>
<keyword id="KW-0408">Iron</keyword>
<keyword id="KW-0411">Iron-sulfur</keyword>
<keyword id="KW-0479">Metal-binding</keyword>
<keyword id="KW-0489">Methyltransferase</keyword>
<keyword id="KW-0698">rRNA processing</keyword>
<keyword id="KW-0949">S-adenosyl-L-methionine</keyword>
<keyword id="KW-0808">Transferase</keyword>
<keyword id="KW-0819">tRNA processing</keyword>
<evidence type="ECO:0000255" key="1">
    <source>
        <dbReference type="HAMAP-Rule" id="MF_01849"/>
    </source>
</evidence>
<evidence type="ECO:0000255" key="2">
    <source>
        <dbReference type="PROSITE-ProRule" id="PRU01266"/>
    </source>
</evidence>